<proteinExistence type="evidence at transcript level"/>
<gene>
    <name evidence="2" type="primary">LARP7</name>
    <name evidence="7" type="ORF">QtsA-19289</name>
</gene>
<protein>
    <recommendedName>
        <fullName evidence="2">La-related protein 7</fullName>
    </recommendedName>
    <alternativeName>
        <fullName evidence="2">La ribonucleoprotein domain family member 7</fullName>
    </alternativeName>
</protein>
<dbReference type="EMBL" id="AB169363">
    <property type="protein sequence ID" value="BAE01448.1"/>
    <property type="molecule type" value="mRNA"/>
</dbReference>
<dbReference type="SMR" id="Q4R627"/>
<dbReference type="STRING" id="9541.ENSMFAP00000001186"/>
<dbReference type="Ensembl" id="ENSMFAT00000029366.2">
    <property type="protein sequence ID" value="ENSMFAP00000001189.2"/>
    <property type="gene ID" value="ENSMFAG00000036506.2"/>
</dbReference>
<dbReference type="eggNOG" id="KOG0118">
    <property type="taxonomic scope" value="Eukaryota"/>
</dbReference>
<dbReference type="GeneTree" id="ENSGT00940000154949"/>
<dbReference type="Proteomes" id="UP000233100">
    <property type="component" value="Chromosome 5"/>
</dbReference>
<dbReference type="Bgee" id="ENSMFAG00000036506">
    <property type="expression patterns" value="Expressed in heart and 13 other cell types or tissues"/>
</dbReference>
<dbReference type="GO" id="GO:0120259">
    <property type="term" value="C:7SK snRNP"/>
    <property type="evidence" value="ECO:0007669"/>
    <property type="project" value="Ensembl"/>
</dbReference>
<dbReference type="GO" id="GO:0005829">
    <property type="term" value="C:cytosol"/>
    <property type="evidence" value="ECO:0007669"/>
    <property type="project" value="Ensembl"/>
</dbReference>
<dbReference type="GO" id="GO:0005654">
    <property type="term" value="C:nucleoplasm"/>
    <property type="evidence" value="ECO:0007669"/>
    <property type="project" value="UniProtKB-SubCell"/>
</dbReference>
<dbReference type="GO" id="GO:0005634">
    <property type="term" value="C:nucleus"/>
    <property type="evidence" value="ECO:0000250"/>
    <property type="project" value="UniProtKB"/>
</dbReference>
<dbReference type="GO" id="GO:1990904">
    <property type="term" value="C:ribonucleoprotein complex"/>
    <property type="evidence" value="ECO:0000250"/>
    <property type="project" value="UniProtKB"/>
</dbReference>
<dbReference type="GO" id="GO:0097322">
    <property type="term" value="F:7SK snRNA binding"/>
    <property type="evidence" value="ECO:0000250"/>
    <property type="project" value="UniProtKB"/>
</dbReference>
<dbReference type="GO" id="GO:0017070">
    <property type="term" value="F:U6 snRNA binding"/>
    <property type="evidence" value="ECO:0000250"/>
    <property type="project" value="UniProtKB"/>
</dbReference>
<dbReference type="GO" id="GO:0000494">
    <property type="term" value="P:box C/D sno(s)RNA 3'-end processing"/>
    <property type="evidence" value="ECO:0000250"/>
    <property type="project" value="UniProtKB"/>
</dbReference>
<dbReference type="GO" id="GO:0030154">
    <property type="term" value="P:cell differentiation"/>
    <property type="evidence" value="ECO:0007669"/>
    <property type="project" value="UniProtKB-KW"/>
</dbReference>
<dbReference type="GO" id="GO:0006397">
    <property type="term" value="P:mRNA processing"/>
    <property type="evidence" value="ECO:0007669"/>
    <property type="project" value="UniProtKB-KW"/>
</dbReference>
<dbReference type="GO" id="GO:0000122">
    <property type="term" value="P:negative regulation of transcription by RNA polymerase II"/>
    <property type="evidence" value="ECO:0007669"/>
    <property type="project" value="Ensembl"/>
</dbReference>
<dbReference type="GO" id="GO:0032897">
    <property type="term" value="P:negative regulation of viral transcription"/>
    <property type="evidence" value="ECO:0007669"/>
    <property type="project" value="Ensembl"/>
</dbReference>
<dbReference type="GO" id="GO:1904871">
    <property type="term" value="P:positive regulation of protein localization to Cajal body"/>
    <property type="evidence" value="ECO:0000250"/>
    <property type="project" value="UniProtKB"/>
</dbReference>
<dbReference type="GO" id="GO:1905382">
    <property type="term" value="P:positive regulation of snRNA transcription by RNA polymerase II"/>
    <property type="evidence" value="ECO:0000250"/>
    <property type="project" value="UniProtKB"/>
</dbReference>
<dbReference type="GO" id="GO:0048024">
    <property type="term" value="P:regulation of mRNA splicing, via spliceosome"/>
    <property type="evidence" value="ECO:0000250"/>
    <property type="project" value="UniProtKB"/>
</dbReference>
<dbReference type="GO" id="GO:0008380">
    <property type="term" value="P:RNA splicing"/>
    <property type="evidence" value="ECO:0007669"/>
    <property type="project" value="UniProtKB-KW"/>
</dbReference>
<dbReference type="GO" id="GO:0007283">
    <property type="term" value="P:spermatogenesis"/>
    <property type="evidence" value="ECO:0000250"/>
    <property type="project" value="UniProtKB"/>
</dbReference>
<dbReference type="GO" id="GO:1990438">
    <property type="term" value="P:U6 2'-O-snRNA methylation"/>
    <property type="evidence" value="ECO:0000250"/>
    <property type="project" value="UniProtKB"/>
</dbReference>
<dbReference type="CDD" id="cd08032">
    <property type="entry name" value="LARP_7"/>
    <property type="match status" value="1"/>
</dbReference>
<dbReference type="CDD" id="cd12290">
    <property type="entry name" value="RRM1_LARP7"/>
    <property type="match status" value="1"/>
</dbReference>
<dbReference type="CDD" id="cd12542">
    <property type="entry name" value="RRM2_LARP7"/>
    <property type="match status" value="1"/>
</dbReference>
<dbReference type="FunFam" id="1.10.10.10:FF:000158">
    <property type="entry name" value="La ribonucleoprotein domain family member 7"/>
    <property type="match status" value="1"/>
</dbReference>
<dbReference type="FunFam" id="3.30.70.330:FF:000281">
    <property type="entry name" value="la-related protein 7 isoform X1"/>
    <property type="match status" value="1"/>
</dbReference>
<dbReference type="FunFam" id="3.30.70.330:FF:000379">
    <property type="entry name" value="la-related protein 7 isoform X2"/>
    <property type="match status" value="1"/>
</dbReference>
<dbReference type="Gene3D" id="3.30.70.330">
    <property type="match status" value="2"/>
</dbReference>
<dbReference type="Gene3D" id="1.10.10.10">
    <property type="entry name" value="Winged helix-like DNA-binding domain superfamily/Winged helix DNA-binding domain"/>
    <property type="match status" value="1"/>
</dbReference>
<dbReference type="InterPro" id="IPR045180">
    <property type="entry name" value="La_dom_prot"/>
</dbReference>
<dbReference type="InterPro" id="IPR006630">
    <property type="entry name" value="La_HTH"/>
</dbReference>
<dbReference type="InterPro" id="IPR014886">
    <property type="entry name" value="La_xRRM"/>
</dbReference>
<dbReference type="InterPro" id="IPR034946">
    <property type="entry name" value="LARP7_La"/>
</dbReference>
<dbReference type="InterPro" id="IPR034887">
    <property type="entry name" value="LARP7_RRM1"/>
</dbReference>
<dbReference type="InterPro" id="IPR034910">
    <property type="entry name" value="LARP7_RRM2"/>
</dbReference>
<dbReference type="InterPro" id="IPR002344">
    <property type="entry name" value="Lupus_La"/>
</dbReference>
<dbReference type="InterPro" id="IPR012677">
    <property type="entry name" value="Nucleotide-bd_a/b_plait_sf"/>
</dbReference>
<dbReference type="InterPro" id="IPR035979">
    <property type="entry name" value="RBD_domain_sf"/>
</dbReference>
<dbReference type="InterPro" id="IPR000504">
    <property type="entry name" value="RRM_dom"/>
</dbReference>
<dbReference type="InterPro" id="IPR036388">
    <property type="entry name" value="WH-like_DNA-bd_sf"/>
</dbReference>
<dbReference type="InterPro" id="IPR036390">
    <property type="entry name" value="WH_DNA-bd_sf"/>
</dbReference>
<dbReference type="PANTHER" id="PTHR22792:SF62">
    <property type="entry name" value="LA-RELATED PROTEIN 7"/>
    <property type="match status" value="1"/>
</dbReference>
<dbReference type="PANTHER" id="PTHR22792">
    <property type="entry name" value="LUPUS LA PROTEIN-RELATED"/>
    <property type="match status" value="1"/>
</dbReference>
<dbReference type="Pfam" id="PF05383">
    <property type="entry name" value="La"/>
    <property type="match status" value="1"/>
</dbReference>
<dbReference type="Pfam" id="PF00076">
    <property type="entry name" value="RRM_1"/>
    <property type="match status" value="1"/>
</dbReference>
<dbReference type="Pfam" id="PF08777">
    <property type="entry name" value="RRM_3"/>
    <property type="match status" value="1"/>
</dbReference>
<dbReference type="PRINTS" id="PR00302">
    <property type="entry name" value="LUPUSLA"/>
</dbReference>
<dbReference type="SMART" id="SM00715">
    <property type="entry name" value="LA"/>
    <property type="match status" value="1"/>
</dbReference>
<dbReference type="SMART" id="SM00360">
    <property type="entry name" value="RRM"/>
    <property type="match status" value="1"/>
</dbReference>
<dbReference type="SUPFAM" id="SSF54928">
    <property type="entry name" value="RNA-binding domain, RBD"/>
    <property type="match status" value="2"/>
</dbReference>
<dbReference type="SUPFAM" id="SSF46785">
    <property type="entry name" value="Winged helix' DNA-binding domain"/>
    <property type="match status" value="1"/>
</dbReference>
<dbReference type="PROSITE" id="PS50961">
    <property type="entry name" value="HTH_LA"/>
    <property type="match status" value="1"/>
</dbReference>
<dbReference type="PROSITE" id="PS50102">
    <property type="entry name" value="RRM"/>
    <property type="match status" value="1"/>
</dbReference>
<dbReference type="PROSITE" id="PS51939">
    <property type="entry name" value="XRRM"/>
    <property type="match status" value="1"/>
</dbReference>
<sequence>METESGNQKNVMEEESTEKKKEVEKKKRSRVKQVLADIAKQVDFWFGDANLHKDRFLREQIEKSRDGYVDISLLVSFNKMKKLTTDGKLIARALRSSAVVELDLEGTRIRRKKPLGERPKDEDERTVYVELLPKNVNHSWIERVFGKCGNVVYISIPHYKSTGDPKGFAFVEFETKEQAAKAIEFLNNPPEEAPRKPGIFPKTVKNKPIPALRVVEEKKKKKKKKGRMKKEDNVQAKEENMDTTNTSISKMKRSRPTSEGSDIESTEPQKQSSKKKKKRDRVEASSLPEVRTGKRKRSSSEDAESLGPRSKVKKIIQKDIIKEPSEASKENRDIEISTEEEKDTGDLKDSSLLKTKRKHKKKHKERHKMGEEVIPLRVLSKSEWMDLKKEYLALQKASMASLKKTISQIKSESEMETDGGVPQKTGMKNEKTNSEECPTQEKVNATGPQFVSGVIVKIISTEPLPGRKQVRDTLAAISEVLYVDLLEGDTECHARFKTPEDAQAVINAYTEISKKHCWKLEILSGDHEQRYWQKILVDRQAKLNQPREKKRGTEKLITKAEKIRLAKTQQASKHIRFSEYD</sequence>
<accession>Q4R627</accession>
<keyword id="KW-0007">Acetylation</keyword>
<keyword id="KW-0221">Differentiation</keyword>
<keyword id="KW-1017">Isopeptide bond</keyword>
<keyword id="KW-0507">mRNA processing</keyword>
<keyword id="KW-0508">mRNA splicing</keyword>
<keyword id="KW-0539">Nucleus</keyword>
<keyword id="KW-0597">Phosphoprotein</keyword>
<keyword id="KW-1185">Reference proteome</keyword>
<keyword id="KW-0694">RNA-binding</keyword>
<keyword id="KW-0744">Spermatogenesis</keyword>
<keyword id="KW-0804">Transcription</keyword>
<keyword id="KW-0805">Transcription regulation</keyword>
<keyword id="KW-0832">Ubl conjugation</keyword>
<organism>
    <name type="scientific">Macaca fascicularis</name>
    <name type="common">Crab-eating macaque</name>
    <name type="synonym">Cynomolgus monkey</name>
    <dbReference type="NCBI Taxonomy" id="9541"/>
    <lineage>
        <taxon>Eukaryota</taxon>
        <taxon>Metazoa</taxon>
        <taxon>Chordata</taxon>
        <taxon>Craniata</taxon>
        <taxon>Vertebrata</taxon>
        <taxon>Euteleostomi</taxon>
        <taxon>Mammalia</taxon>
        <taxon>Eutheria</taxon>
        <taxon>Euarchontoglires</taxon>
        <taxon>Primates</taxon>
        <taxon>Haplorrhini</taxon>
        <taxon>Catarrhini</taxon>
        <taxon>Cercopithecidae</taxon>
        <taxon>Cercopithecinae</taxon>
        <taxon>Macaca</taxon>
    </lineage>
</organism>
<name>LARP7_MACFA</name>
<comment type="function">
    <text evidence="1 2">RNA-binding protein that specifically binds distinct small nuclear RNA (snRNAs) and regulates their processing and function. Specifically binds the 7SK snRNA (7SK RNA) and acts as a core component of the 7SK ribonucleoprotein (RNP) complex, thereby acting as a negative regulator of transcription elongation by RNA polymerase II. The 7SK RNP complex sequesters the positive transcription elongation factor b (P-TEFb) in a large inactive 7SK RNP complex preventing RNA polymerase II phosphorylation and subsequent transcriptional elongation. The 7SK RNP complex also promotes snRNA gene transcription by RNA polymerase II via interaction with the little elongation complex (LEC). LARP7 specifically binds to the highly conserved 3'-terminal U-rich stretch of 7SK RNA; on stimulation, remains associated with 7SK RNA, whereas P-TEFb is released from the complex. LARP7 also acts as a regulator of mRNA splicing fidelity by promoting U6 snRNA processing. Specifically binds U6 snRNAs and associates with a subset of box C/D RNP complexes: promotes U6 snRNA 2'-O-methylation by facilitating U6 snRNA loading into box C/D RNP complexes. U6 snRNA 2'-O-methylation is required for mRNA splicing fidelity. Binds U6 snRNAs with a 5'-CAGGG-3' sequence motif (By similarity). U6 snRNA processing is required for spermatogenesis (By similarity).</text>
</comment>
<comment type="subunit">
    <text evidence="2">Core component of the 7SK RNP complex, at least composed of 7SK RNA, LARP7, MEPCE, HEXIM1 (or HEXIM2) and P-TEFb (composed of CDK9 and CCNT1/cyclin-T1). Interacts with METTL16. Interacts with RBM7; upon genotoxic stress this interaction is enhanced, triggering the release of inactive P-TEFb complex from the core, yielding to P-TEFb complex activation. Associates with box C/D small nucleolar ribonucleoprotein (snoRNP) complexes.</text>
</comment>
<comment type="subcellular location">
    <subcellularLocation>
        <location evidence="2">Nucleus</location>
        <location evidence="2">Nucleoplasm</location>
    </subcellularLocation>
</comment>
<comment type="domain">
    <text evidence="2">The xRRM domain binds the 3' end of 7SK snRNA (7SK RNA) at the top of stem-loop 4.</text>
</comment>
<comment type="similarity">
    <text evidence="8">Belongs to the LARP7 family.</text>
</comment>
<evidence type="ECO:0000250" key="1">
    <source>
        <dbReference type="UniProtKB" id="Q05CL8"/>
    </source>
</evidence>
<evidence type="ECO:0000250" key="2">
    <source>
        <dbReference type="UniProtKB" id="Q4G0J3"/>
    </source>
</evidence>
<evidence type="ECO:0000255" key="3">
    <source>
        <dbReference type="PROSITE-ProRule" id="PRU00176"/>
    </source>
</evidence>
<evidence type="ECO:0000255" key="4">
    <source>
        <dbReference type="PROSITE-ProRule" id="PRU00332"/>
    </source>
</evidence>
<evidence type="ECO:0000255" key="5">
    <source>
        <dbReference type="PROSITE-ProRule" id="PRU01288"/>
    </source>
</evidence>
<evidence type="ECO:0000256" key="6">
    <source>
        <dbReference type="SAM" id="MobiDB-lite"/>
    </source>
</evidence>
<evidence type="ECO:0000303" key="7">
    <source ref="1"/>
</evidence>
<evidence type="ECO:0000305" key="8"/>
<feature type="chain" id="PRO_0000281678" description="La-related protein 7">
    <location>
        <begin position="1"/>
        <end position="581"/>
    </location>
</feature>
<feature type="domain" description="HTH La-type RNA-binding" evidence="4">
    <location>
        <begin position="28"/>
        <end position="122"/>
    </location>
</feature>
<feature type="domain" description="RRM" evidence="3">
    <location>
        <begin position="125"/>
        <end position="203"/>
    </location>
</feature>
<feature type="domain" description="xRRM" evidence="5">
    <location>
        <begin position="449"/>
        <end position="562"/>
    </location>
</feature>
<feature type="region of interest" description="Disordered" evidence="6">
    <location>
        <begin position="1"/>
        <end position="28"/>
    </location>
</feature>
<feature type="region of interest" description="Disordered" evidence="6">
    <location>
        <begin position="188"/>
        <end position="368"/>
    </location>
</feature>
<feature type="region of interest" description="Disordered" evidence="6">
    <location>
        <begin position="410"/>
        <end position="440"/>
    </location>
</feature>
<feature type="compositionally biased region" description="Polar residues" evidence="6">
    <location>
        <begin position="1"/>
        <end position="10"/>
    </location>
</feature>
<feature type="compositionally biased region" description="Basic residues" evidence="6">
    <location>
        <begin position="219"/>
        <end position="228"/>
    </location>
</feature>
<feature type="compositionally biased region" description="Basic and acidic residues" evidence="6">
    <location>
        <begin position="229"/>
        <end position="240"/>
    </location>
</feature>
<feature type="compositionally biased region" description="Basic and acidic residues" evidence="6">
    <location>
        <begin position="316"/>
        <end position="335"/>
    </location>
</feature>
<feature type="compositionally biased region" description="Basic residues" evidence="6">
    <location>
        <begin position="354"/>
        <end position="367"/>
    </location>
</feature>
<feature type="modified residue" description="N-acetylmethionine" evidence="2">
    <location>
        <position position="1"/>
    </location>
</feature>
<feature type="modified residue" description="Phosphothreonine" evidence="2">
    <location>
        <position position="257"/>
    </location>
</feature>
<feature type="modified residue" description="Phosphoserine" evidence="2">
    <location>
        <position position="258"/>
    </location>
</feature>
<feature type="modified residue" description="Phosphoserine" evidence="2">
    <location>
        <position position="261"/>
    </location>
</feature>
<feature type="modified residue" description="Phosphoserine" evidence="2">
    <location>
        <position position="273"/>
    </location>
</feature>
<feature type="modified residue" description="Phosphoserine" evidence="2">
    <location>
        <position position="298"/>
    </location>
</feature>
<feature type="modified residue" description="Phosphoserine" evidence="2">
    <location>
        <position position="299"/>
    </location>
</feature>
<feature type="modified residue" description="Phosphoserine" evidence="2">
    <location>
        <position position="300"/>
    </location>
</feature>
<feature type="modified residue" description="Phosphoserine" evidence="2">
    <location>
        <position position="337"/>
    </location>
</feature>
<feature type="modified residue" description="Phosphothreonine" evidence="2">
    <location>
        <position position="338"/>
    </location>
</feature>
<feature type="modified residue" description="Phosphoserine" evidence="2">
    <location>
        <position position="351"/>
    </location>
</feature>
<feature type="cross-link" description="Glycyl lysine isopeptide (Lys-Gly) (interchain with G-Cter in SUMO2)" evidence="2">
    <location>
        <position position="237"/>
    </location>
</feature>
<feature type="cross-link" description="Glycyl lysine isopeptide (Lys-Gly) (interchain with G-Cter in SUMO2)" evidence="2">
    <location>
        <position position="410"/>
    </location>
</feature>
<reference key="1">
    <citation type="submission" date="2005-06" db="EMBL/GenBank/DDBJ databases">
        <title>DNA sequences of macaque genes expressed in brain or testis and its evolutionary implications.</title>
        <authorList>
            <consortium name="International consortium for macaque cDNA sequencing and analysis"/>
        </authorList>
    </citation>
    <scope>NUCLEOTIDE SEQUENCE [LARGE SCALE MRNA]</scope>
    <source>
        <tissue>Testis</tissue>
    </source>
</reference>